<reference key="1">
    <citation type="journal article" date="2011" name="J. Bacteriol.">
        <title>Complete genome sequence of the plant growth-promoting endophyte Burkholderia phytofirmans strain PsJN.</title>
        <authorList>
            <person name="Weilharter A."/>
            <person name="Mitter B."/>
            <person name="Shin M.V."/>
            <person name="Chain P.S."/>
            <person name="Nowak J."/>
            <person name="Sessitsch A."/>
        </authorList>
    </citation>
    <scope>NUCLEOTIDE SEQUENCE [LARGE SCALE GENOMIC DNA]</scope>
    <source>
        <strain>DSM 17436 / LMG 22146 / PsJN</strain>
    </source>
</reference>
<dbReference type="EMBL" id="CP001052">
    <property type="protein sequence ID" value="ACD15156.1"/>
    <property type="molecule type" value="Genomic_DNA"/>
</dbReference>
<dbReference type="RefSeq" id="WP_012431792.1">
    <property type="nucleotide sequence ID" value="NC_010681.1"/>
</dbReference>
<dbReference type="SMR" id="B2SXB7"/>
<dbReference type="STRING" id="398527.Bphyt_0732"/>
<dbReference type="GeneID" id="97305706"/>
<dbReference type="KEGG" id="bpy:Bphyt_0732"/>
<dbReference type="eggNOG" id="COG1420">
    <property type="taxonomic scope" value="Bacteria"/>
</dbReference>
<dbReference type="HOGENOM" id="CLU_050019_0_0_4"/>
<dbReference type="OrthoDB" id="9783139at2"/>
<dbReference type="Proteomes" id="UP000001739">
    <property type="component" value="Chromosome 1"/>
</dbReference>
<dbReference type="GO" id="GO:0003677">
    <property type="term" value="F:DNA binding"/>
    <property type="evidence" value="ECO:0007669"/>
    <property type="project" value="InterPro"/>
</dbReference>
<dbReference type="GO" id="GO:0045892">
    <property type="term" value="P:negative regulation of DNA-templated transcription"/>
    <property type="evidence" value="ECO:0007669"/>
    <property type="project" value="UniProtKB-UniRule"/>
</dbReference>
<dbReference type="Gene3D" id="3.30.450.40">
    <property type="match status" value="1"/>
</dbReference>
<dbReference type="Gene3D" id="3.30.390.60">
    <property type="entry name" value="Heat-inducible transcription repressor hrca homolog, domain 3"/>
    <property type="match status" value="1"/>
</dbReference>
<dbReference type="Gene3D" id="1.10.10.10">
    <property type="entry name" value="Winged helix-like DNA-binding domain superfamily/Winged helix DNA-binding domain"/>
    <property type="match status" value="1"/>
</dbReference>
<dbReference type="HAMAP" id="MF_00081">
    <property type="entry name" value="HrcA"/>
    <property type="match status" value="1"/>
</dbReference>
<dbReference type="InterPro" id="IPR029016">
    <property type="entry name" value="GAF-like_dom_sf"/>
</dbReference>
<dbReference type="InterPro" id="IPR002571">
    <property type="entry name" value="HrcA"/>
</dbReference>
<dbReference type="InterPro" id="IPR021153">
    <property type="entry name" value="HrcA_C"/>
</dbReference>
<dbReference type="InterPro" id="IPR036388">
    <property type="entry name" value="WH-like_DNA-bd_sf"/>
</dbReference>
<dbReference type="InterPro" id="IPR036390">
    <property type="entry name" value="WH_DNA-bd_sf"/>
</dbReference>
<dbReference type="InterPro" id="IPR005104">
    <property type="entry name" value="WHTH_HrcA_DNA-bd"/>
</dbReference>
<dbReference type="InterPro" id="IPR023120">
    <property type="entry name" value="WHTH_transcript_rep_HrcA_IDD"/>
</dbReference>
<dbReference type="NCBIfam" id="TIGR00331">
    <property type="entry name" value="hrcA"/>
    <property type="match status" value="1"/>
</dbReference>
<dbReference type="PANTHER" id="PTHR34824">
    <property type="entry name" value="HEAT-INDUCIBLE TRANSCRIPTION REPRESSOR HRCA"/>
    <property type="match status" value="1"/>
</dbReference>
<dbReference type="PANTHER" id="PTHR34824:SF1">
    <property type="entry name" value="HEAT-INDUCIBLE TRANSCRIPTION REPRESSOR HRCA"/>
    <property type="match status" value="1"/>
</dbReference>
<dbReference type="Pfam" id="PF01628">
    <property type="entry name" value="HrcA"/>
    <property type="match status" value="1"/>
</dbReference>
<dbReference type="Pfam" id="PF03444">
    <property type="entry name" value="HrcA_DNA-bdg"/>
    <property type="match status" value="1"/>
</dbReference>
<dbReference type="PIRSF" id="PIRSF005485">
    <property type="entry name" value="HrcA"/>
    <property type="match status" value="1"/>
</dbReference>
<dbReference type="SUPFAM" id="SSF55781">
    <property type="entry name" value="GAF domain-like"/>
    <property type="match status" value="1"/>
</dbReference>
<dbReference type="SUPFAM" id="SSF46785">
    <property type="entry name" value="Winged helix' DNA-binding domain"/>
    <property type="match status" value="1"/>
</dbReference>
<gene>
    <name evidence="1" type="primary">hrcA</name>
    <name type="ordered locus">Bphyt_0732</name>
</gene>
<evidence type="ECO:0000255" key="1">
    <source>
        <dbReference type="HAMAP-Rule" id="MF_00081"/>
    </source>
</evidence>
<name>HRCA_PARPJ</name>
<accession>B2SXB7</accession>
<proteinExistence type="inferred from homology"/>
<organism>
    <name type="scientific">Paraburkholderia phytofirmans (strain DSM 17436 / LMG 22146 / PsJN)</name>
    <name type="common">Burkholderia phytofirmans</name>
    <dbReference type="NCBI Taxonomy" id="398527"/>
    <lineage>
        <taxon>Bacteria</taxon>
        <taxon>Pseudomonadati</taxon>
        <taxon>Pseudomonadota</taxon>
        <taxon>Betaproteobacteria</taxon>
        <taxon>Burkholderiales</taxon>
        <taxon>Burkholderiaceae</taxon>
        <taxon>Paraburkholderia</taxon>
    </lineage>
</organism>
<sequence>MLDPRAQTLLKTLIERYIAEGQPVGSRTLSRYSGLELSPATIRNVMSDLEDLGLVISPHTSAGRIPTPRGYRLFVDTMLTVESAADEEAVTRTVKTTLQAGEPQKIVAAAASVLSNLSQFAGVVLTPRRSHVFKQIEFMRLSDKRILLIIVTPEGDVQNRIMATQRDFSPSQLVEASNYINAHFAGLSFDDVRRRLREEIDALRGDMTTLMHAAVTASTDESDTGETVLISGERNLLEVADLSSDMARLRKLFDVFDQKTSLLQLLDVSSHAAGVQIFIGGESNLVPIEEMSVVTAPYEVNGKIVGTLGVIGPTRMAYNRVIPIVDITARLLSLTLSQQ</sequence>
<keyword id="KW-0678">Repressor</keyword>
<keyword id="KW-0346">Stress response</keyword>
<keyword id="KW-0804">Transcription</keyword>
<keyword id="KW-0805">Transcription regulation</keyword>
<feature type="chain" id="PRO_1000092800" description="Heat-inducible transcription repressor HrcA">
    <location>
        <begin position="1"/>
        <end position="339"/>
    </location>
</feature>
<protein>
    <recommendedName>
        <fullName evidence="1">Heat-inducible transcription repressor HrcA</fullName>
    </recommendedName>
</protein>
<comment type="function">
    <text evidence="1">Negative regulator of class I heat shock genes (grpE-dnaK-dnaJ and groELS operons). Prevents heat-shock induction of these operons.</text>
</comment>
<comment type="similarity">
    <text evidence="1">Belongs to the HrcA family.</text>
</comment>